<proteinExistence type="inferred from homology"/>
<feature type="chain" id="PRO_0000193368" description="Ubiquinone biosynthesis O-methyltransferase">
    <location>
        <begin position="1"/>
        <end position="241"/>
    </location>
</feature>
<feature type="binding site" evidence="1">
    <location>
        <position position="46"/>
    </location>
    <ligand>
        <name>S-adenosyl-L-methionine</name>
        <dbReference type="ChEBI" id="CHEBI:59789"/>
    </ligand>
</feature>
<feature type="binding site" evidence="1">
    <location>
        <position position="66"/>
    </location>
    <ligand>
        <name>S-adenosyl-L-methionine</name>
        <dbReference type="ChEBI" id="CHEBI:59789"/>
    </ligand>
</feature>
<feature type="binding site" evidence="1">
    <location>
        <position position="87"/>
    </location>
    <ligand>
        <name>S-adenosyl-L-methionine</name>
        <dbReference type="ChEBI" id="CHEBI:59789"/>
    </ligand>
</feature>
<feature type="binding site" evidence="1">
    <location>
        <position position="131"/>
    </location>
    <ligand>
        <name>S-adenosyl-L-methionine</name>
        <dbReference type="ChEBI" id="CHEBI:59789"/>
    </ligand>
</feature>
<keyword id="KW-0489">Methyltransferase</keyword>
<keyword id="KW-0949">S-adenosyl-L-methionine</keyword>
<keyword id="KW-0808">Transferase</keyword>
<keyword id="KW-0831">Ubiquinone biosynthesis</keyword>
<dbReference type="EC" id="2.1.1.222" evidence="1"/>
<dbReference type="EC" id="2.1.1.64" evidence="1"/>
<dbReference type="EMBL" id="BX640447">
    <property type="protein sequence ID" value="CAE33967.1"/>
    <property type="status" value="ALT_INIT"/>
    <property type="molecule type" value="Genomic_DNA"/>
</dbReference>
<dbReference type="RefSeq" id="WP_033451944.1">
    <property type="nucleotide sequence ID" value="NC_002927.3"/>
</dbReference>
<dbReference type="SMR" id="Q7WGT9"/>
<dbReference type="KEGG" id="bbr:BB3475"/>
<dbReference type="eggNOG" id="COG2227">
    <property type="taxonomic scope" value="Bacteria"/>
</dbReference>
<dbReference type="HOGENOM" id="CLU_042432_5_0_4"/>
<dbReference type="UniPathway" id="UPA00232"/>
<dbReference type="Proteomes" id="UP000001027">
    <property type="component" value="Chromosome"/>
</dbReference>
<dbReference type="GO" id="GO:0102208">
    <property type="term" value="F:2-polyprenyl-6-hydroxyphenol methylase activity"/>
    <property type="evidence" value="ECO:0007669"/>
    <property type="project" value="UniProtKB-EC"/>
</dbReference>
<dbReference type="GO" id="GO:0061542">
    <property type="term" value="F:3-demethylubiquinol 3-O-methyltransferase activity"/>
    <property type="evidence" value="ECO:0007669"/>
    <property type="project" value="UniProtKB-UniRule"/>
</dbReference>
<dbReference type="GO" id="GO:0010420">
    <property type="term" value="F:polyprenyldihydroxybenzoate methyltransferase activity"/>
    <property type="evidence" value="ECO:0007669"/>
    <property type="project" value="InterPro"/>
</dbReference>
<dbReference type="GO" id="GO:0032259">
    <property type="term" value="P:methylation"/>
    <property type="evidence" value="ECO:0007669"/>
    <property type="project" value="UniProtKB-KW"/>
</dbReference>
<dbReference type="CDD" id="cd02440">
    <property type="entry name" value="AdoMet_MTases"/>
    <property type="match status" value="1"/>
</dbReference>
<dbReference type="FunFam" id="3.40.50.150:FF:000028">
    <property type="entry name" value="Ubiquinone biosynthesis O-methyltransferase"/>
    <property type="match status" value="1"/>
</dbReference>
<dbReference type="Gene3D" id="3.40.50.150">
    <property type="entry name" value="Vaccinia Virus protein VP39"/>
    <property type="match status" value="1"/>
</dbReference>
<dbReference type="HAMAP" id="MF_00472">
    <property type="entry name" value="UbiG"/>
    <property type="match status" value="1"/>
</dbReference>
<dbReference type="InterPro" id="IPR029063">
    <property type="entry name" value="SAM-dependent_MTases_sf"/>
</dbReference>
<dbReference type="InterPro" id="IPR010233">
    <property type="entry name" value="UbiG_MeTrfase"/>
</dbReference>
<dbReference type="NCBIfam" id="TIGR01983">
    <property type="entry name" value="UbiG"/>
    <property type="match status" value="1"/>
</dbReference>
<dbReference type="PANTHER" id="PTHR43464">
    <property type="entry name" value="METHYLTRANSFERASE"/>
    <property type="match status" value="1"/>
</dbReference>
<dbReference type="PANTHER" id="PTHR43464:SF19">
    <property type="entry name" value="UBIQUINONE BIOSYNTHESIS O-METHYLTRANSFERASE, MITOCHONDRIAL"/>
    <property type="match status" value="1"/>
</dbReference>
<dbReference type="Pfam" id="PF13489">
    <property type="entry name" value="Methyltransf_23"/>
    <property type="match status" value="1"/>
</dbReference>
<dbReference type="SUPFAM" id="SSF53335">
    <property type="entry name" value="S-adenosyl-L-methionine-dependent methyltransferases"/>
    <property type="match status" value="1"/>
</dbReference>
<evidence type="ECO:0000255" key="1">
    <source>
        <dbReference type="HAMAP-Rule" id="MF_00472"/>
    </source>
</evidence>
<evidence type="ECO:0000305" key="2"/>
<gene>
    <name evidence="1" type="primary">ubiG</name>
    <name type="ordered locus">BB3475</name>
</gene>
<protein>
    <recommendedName>
        <fullName evidence="1">Ubiquinone biosynthesis O-methyltransferase</fullName>
    </recommendedName>
    <alternativeName>
        <fullName evidence="1">2-polyprenyl-6-hydroxyphenol methylase</fullName>
        <ecNumber evidence="1">2.1.1.222</ecNumber>
    </alternativeName>
    <alternativeName>
        <fullName evidence="1">3-demethylubiquinone 3-O-methyltransferase</fullName>
        <ecNumber evidence="1">2.1.1.64</ecNumber>
    </alternativeName>
</protein>
<reference key="1">
    <citation type="journal article" date="2003" name="Nat. Genet.">
        <title>Comparative analysis of the genome sequences of Bordetella pertussis, Bordetella parapertussis and Bordetella bronchiseptica.</title>
        <authorList>
            <person name="Parkhill J."/>
            <person name="Sebaihia M."/>
            <person name="Preston A."/>
            <person name="Murphy L.D."/>
            <person name="Thomson N.R."/>
            <person name="Harris D.E."/>
            <person name="Holden M.T.G."/>
            <person name="Churcher C.M."/>
            <person name="Bentley S.D."/>
            <person name="Mungall K.L."/>
            <person name="Cerdeno-Tarraga A.-M."/>
            <person name="Temple L."/>
            <person name="James K.D."/>
            <person name="Harris B."/>
            <person name="Quail M.A."/>
            <person name="Achtman M."/>
            <person name="Atkin R."/>
            <person name="Baker S."/>
            <person name="Basham D."/>
            <person name="Bason N."/>
            <person name="Cherevach I."/>
            <person name="Chillingworth T."/>
            <person name="Collins M."/>
            <person name="Cronin A."/>
            <person name="Davis P."/>
            <person name="Doggett J."/>
            <person name="Feltwell T."/>
            <person name="Goble A."/>
            <person name="Hamlin N."/>
            <person name="Hauser H."/>
            <person name="Holroyd S."/>
            <person name="Jagels K."/>
            <person name="Leather S."/>
            <person name="Moule S."/>
            <person name="Norberczak H."/>
            <person name="O'Neil S."/>
            <person name="Ormond D."/>
            <person name="Price C."/>
            <person name="Rabbinowitsch E."/>
            <person name="Rutter S."/>
            <person name="Sanders M."/>
            <person name="Saunders D."/>
            <person name="Seeger K."/>
            <person name="Sharp S."/>
            <person name="Simmonds M."/>
            <person name="Skelton J."/>
            <person name="Squares R."/>
            <person name="Squares S."/>
            <person name="Stevens K."/>
            <person name="Unwin L."/>
            <person name="Whitehead S."/>
            <person name="Barrell B.G."/>
            <person name="Maskell D.J."/>
        </authorList>
    </citation>
    <scope>NUCLEOTIDE SEQUENCE [LARGE SCALE GENOMIC DNA]</scope>
    <source>
        <strain>ATCC BAA-588 / NCTC 13252 / RB50</strain>
    </source>
</reference>
<comment type="function">
    <text evidence="1">O-methyltransferase that catalyzes the 2 O-methylation steps in the ubiquinone biosynthetic pathway.</text>
</comment>
<comment type="catalytic activity">
    <reaction evidence="1">
        <text>a 3-demethylubiquinol + S-adenosyl-L-methionine = a ubiquinol + S-adenosyl-L-homocysteine + H(+)</text>
        <dbReference type="Rhea" id="RHEA:44380"/>
        <dbReference type="Rhea" id="RHEA-COMP:9566"/>
        <dbReference type="Rhea" id="RHEA-COMP:10914"/>
        <dbReference type="ChEBI" id="CHEBI:15378"/>
        <dbReference type="ChEBI" id="CHEBI:17976"/>
        <dbReference type="ChEBI" id="CHEBI:57856"/>
        <dbReference type="ChEBI" id="CHEBI:59789"/>
        <dbReference type="ChEBI" id="CHEBI:84422"/>
        <dbReference type="EC" id="2.1.1.64"/>
    </reaction>
</comment>
<comment type="catalytic activity">
    <reaction evidence="1">
        <text>a 3-(all-trans-polyprenyl)benzene-1,2-diol + S-adenosyl-L-methionine = a 2-methoxy-6-(all-trans-polyprenyl)phenol + S-adenosyl-L-homocysteine + H(+)</text>
        <dbReference type="Rhea" id="RHEA:31411"/>
        <dbReference type="Rhea" id="RHEA-COMP:9550"/>
        <dbReference type="Rhea" id="RHEA-COMP:9551"/>
        <dbReference type="ChEBI" id="CHEBI:15378"/>
        <dbReference type="ChEBI" id="CHEBI:57856"/>
        <dbReference type="ChEBI" id="CHEBI:59789"/>
        <dbReference type="ChEBI" id="CHEBI:62729"/>
        <dbReference type="ChEBI" id="CHEBI:62731"/>
        <dbReference type="EC" id="2.1.1.222"/>
    </reaction>
</comment>
<comment type="pathway">
    <text evidence="1">Cofactor biosynthesis; ubiquinone biosynthesis.</text>
</comment>
<comment type="similarity">
    <text evidence="1">Belongs to the methyltransferase superfamily. UbiG/COQ3 family.</text>
</comment>
<comment type="sequence caution" evidence="2">
    <conflict type="erroneous initiation">
        <sequence resource="EMBL-CDS" id="CAE33967"/>
    </conflict>
</comment>
<sequence>MTTATQSSAPGVNVDQAEVEKFSALAARWWDPESEFKPLHAINPLRLGWIQETAGSLSGKRVLDVGCGGGILSESMAVAGAQVTGIDLAEKSLKIARLHGLESGVKVDYRAVPVEELATEQPGQYDVVTCMEMLEHVPDPASVVRACAALAKPGGWVFFSTLNRNPKSFLFAIVGAEYVLRLLPRGTHSYDSFIKPSELAASARQAGLEPTGMRGMEYNPITQVYSLSANTSVNYLMSTRK</sequence>
<name>UBIG_BORBR</name>
<organism>
    <name type="scientific">Bordetella bronchiseptica (strain ATCC BAA-588 / NCTC 13252 / RB50)</name>
    <name type="common">Alcaligenes bronchisepticus</name>
    <dbReference type="NCBI Taxonomy" id="257310"/>
    <lineage>
        <taxon>Bacteria</taxon>
        <taxon>Pseudomonadati</taxon>
        <taxon>Pseudomonadota</taxon>
        <taxon>Betaproteobacteria</taxon>
        <taxon>Burkholderiales</taxon>
        <taxon>Alcaligenaceae</taxon>
        <taxon>Bordetella</taxon>
    </lineage>
</organism>
<accession>Q7WGT9</accession>